<comment type="function">
    <text evidence="1 2 4 5 6 7 8">In the cuticle, catalyzes the hydrolysis of beta-alanyl-dopamine releasing dopamine and beta-alanine; dopamine is a metabolite involved in the pigmentation and sclerotization of the insect cuticle (PubMed:16299587, PubMed:20439462, PubMed:21571070, PubMed:8580497). In the photoreceptor cells, catalyzes the hydrolysis of carcinine releasing histamine and beta-alanine contributing to the recycling of the neurotransmitter histamine in the optical nerve system (PubMed:12486147, PubMed:16299587, PubMed:20439462, PubMed:5782111). Also, regulates the cuticular hydrocarbon composition in females (PubMed:31118901).</text>
</comment>
<comment type="catalytic activity">
    <reaction evidence="2 4">
        <text>carcinine + H2O = histamine + beta-alanine</text>
        <dbReference type="Rhea" id="RHEA:73463"/>
        <dbReference type="ChEBI" id="CHEBI:15377"/>
        <dbReference type="ChEBI" id="CHEBI:57966"/>
        <dbReference type="ChEBI" id="CHEBI:58432"/>
        <dbReference type="ChEBI" id="CHEBI:192797"/>
    </reaction>
    <physiologicalReaction direction="left-to-right" evidence="2 4">
        <dbReference type="Rhea" id="RHEA:73464"/>
    </physiologicalReaction>
</comment>
<comment type="catalytic activity">
    <reaction evidence="2 4 5">
        <text>beta-alanyl-dopamine + H2O = dopamine + beta-alanine</text>
        <dbReference type="Rhea" id="RHEA:73467"/>
        <dbReference type="ChEBI" id="CHEBI:15377"/>
        <dbReference type="ChEBI" id="CHEBI:57966"/>
        <dbReference type="ChEBI" id="CHEBI:59905"/>
        <dbReference type="ChEBI" id="CHEBI:192799"/>
    </reaction>
    <physiologicalReaction direction="left-to-right" evidence="2 4 5">
        <dbReference type="Rhea" id="RHEA:73468"/>
    </physiologicalReaction>
</comment>
<comment type="biophysicochemical properties">
    <kinetics>
        <KM evidence="4">0.9 uM for beta-alanyl-dopamine (at pH 7 and 25 degrees Celsius)</KM>
        <KM evidence="4">119 uM for carcinine (at pH 7 and 25 degrees Celsius)</KM>
        <text evidence="4">kcat is 23.5 sec(-1) with beta-alanyl-dopamine as substrate (at pH 7 and 25 degrees Celsius) (PubMed:20439462). kcat is 68 sec(-1) with carcinine as substrate (at pH 7 and 25 degrees Celsius) (PubMed:20439462).</text>
    </kinetics>
    <phDependence>
        <text evidence="4">Optimum pH is 6-8.</text>
    </phDependence>
</comment>
<comment type="subunit">
    <text evidence="4">The unprocessed protein forms homodimers (PubMed:20439462). May form heterodimers composed of a 15 kDa alpha subunit and a 30 kDa beta subunit (PubMed:20439462).</text>
</comment>
<comment type="subcellular location">
    <subcellularLocation>
        <location evidence="3">Cell projection</location>
        <location evidence="3">Axon</location>
    </subcellularLocation>
    <subcellularLocation>
        <location evidence="3">Cytoplasm</location>
    </subcellularLocation>
    <text evidence="3">Localizes to the narrow axons and expanded terminals of R1-R6 in the lamina and of R7 and R8 in the medulla.</text>
</comment>
<comment type="tissue specificity">
    <text evidence="2 3 4 5">Expressed in body, head, optic lobes and retina (at protein level) (PubMed:21571070). Expressed in photoreceptor cells R1-R6 in the lamina and in photoreceptor cells R7 and R8 in the medulla (at protein level) (PubMed:16299587, PubMed:17154266, PubMed:20439462).</text>
</comment>
<comment type="developmental stage">
    <text evidence="5">Expressed in embryos in the central nervous system but not in the peripheral nervous system (at protein level).</text>
</comment>
<comment type="PTM">
    <text evidence="3 4 13">The protein is synthesized as a 43 kDa precursor which is then self-processed into a 15 kDa alpha subunit and a 30 kDa beta subunit (Probable) (PubMed:17154266, PubMed:20439462). Processing appears to be necessary for beta-alanyl-dopamine/carcinine hydrolase activity (PubMed:20439462). The beta subunit carries the beta-alanyl-dopamine/carcinine hydrolase activity (PubMed:20439462).</text>
</comment>
<comment type="disruption phenotype">
    <text evidence="6">Lighter pigmentation of the body (PubMed:31118901). Females have higher levels of short chain short chain hydrocarbons (CHC) relative to long chain CHCs compared to wild type females (PubMed:31118901).</text>
</comment>
<comment type="similarity">
    <text evidence="12">Belongs to the peptidase C45 family.</text>
</comment>
<protein>
    <recommendedName>
        <fullName evidence="9">Beta-alanyl-dopamine/carcinine hydrolase</fullName>
        <ecNumber evidence="2 4 13">3.5.1.-</ecNumber>
    </recommendedName>
    <alternativeName>
        <fullName evidence="9">NBAD/carcinine hydrolase</fullName>
    </alternativeName>
    <alternativeName>
        <fullName evidence="11">Protein tan</fullName>
    </alternativeName>
    <component>
        <recommendedName>
            <fullName evidence="10">Beta-alanyl-dopamine/carcinine hydrolase alpha subunit</fullName>
        </recommendedName>
    </component>
    <component>
        <recommendedName>
            <fullName evidence="10">Beta-alanyl-dopamine/carcinine hydrolase beta subunit</fullName>
        </recommendedName>
    </component>
</protein>
<gene>
    <name evidence="16" type="primary">t</name>
    <name evidence="16" type="ORF">CG12120</name>
</gene>
<keyword id="KW-0068">Autocatalytic cleavage</keyword>
<keyword id="KW-0128">Catecholamine metabolism</keyword>
<keyword id="KW-0966">Cell projection</keyword>
<keyword id="KW-0963">Cytoplasm</keyword>
<keyword id="KW-0378">Hydrolase</keyword>
<keyword id="KW-1185">Reference proteome</keyword>
<sequence length="387" mass="43696">MSSGKILPRRQAVPVLYTRGTHYEVGFDMGRTFGSMIKNFLILSKPLNETYLPLYQSPKGRQIYNETLGSVKDSFPQYVRELEGVADGAEVEFHKLFLLHLDEILPQALKHQPRSKNQPTGCSTIIVNQKNCRLLGHTEDALTETLNHYYFVVAHIISDKPQGKYNVKEEHFMSLCYAGHLPGYTMSHNHHGLVFSINTISAELLRSGKTPRHFITRALLATSNVDDAFRVLKDAGVGAADACSINFTFLADPRQMCYNVEMAPSPDRKNESHLNIKEVPLGEHNYHVNQFDRIRQDQANDLMISSSISRMQTFGAYNPPMSEQDVRHMLGDVSGGVYCVWRENNSCDEVVKTIAVGIFDLSARTISLYSDNPSETEPHCRLPLLYK</sequence>
<name>TANN_DROME</name>
<reference evidence="15" key="1">
    <citation type="journal article" date="2011" name="Insect Biochem. Mol. Biol.">
        <title>Constitutive expression and enzymatic activity of Tan protein in brain and epidermis of Ceratitis capitata and of Drosophila melanogaster wild-type and tan mutants.</title>
        <authorList>
            <person name="Perez M.M."/>
            <person name="Sabio G."/>
            <person name="Badaracco A."/>
            <person name="Quesada-Allue L.A."/>
        </authorList>
    </citation>
    <scope>NUCLEOTIDE SEQUENCE [MRNA]</scope>
    <scope>FUNCTION</scope>
    <scope>CATALYTIC ACTIVITY</scope>
    <scope>TISSUE SPECIFICITY</scope>
    <scope>DEVELOPMENTAL STAGE</scope>
    <scope>PROTEOLYTIC CLEAVAGE</scope>
    <scope>MUTAGENESIS OF ARG-217</scope>
    <source>
        <tissue evidence="15">Head</tissue>
    </source>
</reference>
<reference evidence="17" key="2">
    <citation type="journal article" date="2000" name="Science">
        <title>The genome sequence of Drosophila melanogaster.</title>
        <authorList>
            <person name="Adams M.D."/>
            <person name="Celniker S.E."/>
            <person name="Holt R.A."/>
            <person name="Evans C.A."/>
            <person name="Gocayne J.D."/>
            <person name="Amanatides P.G."/>
            <person name="Scherer S.E."/>
            <person name="Li P.W."/>
            <person name="Hoskins R.A."/>
            <person name="Galle R.F."/>
            <person name="George R.A."/>
            <person name="Lewis S.E."/>
            <person name="Richards S."/>
            <person name="Ashburner M."/>
            <person name="Henderson S.N."/>
            <person name="Sutton G.G."/>
            <person name="Wortman J.R."/>
            <person name="Yandell M.D."/>
            <person name="Zhang Q."/>
            <person name="Chen L.X."/>
            <person name="Brandon R.C."/>
            <person name="Rogers Y.-H.C."/>
            <person name="Blazej R.G."/>
            <person name="Champe M."/>
            <person name="Pfeiffer B.D."/>
            <person name="Wan K.H."/>
            <person name="Doyle C."/>
            <person name="Baxter E.G."/>
            <person name="Helt G."/>
            <person name="Nelson C.R."/>
            <person name="Miklos G.L.G."/>
            <person name="Abril J.F."/>
            <person name="Agbayani A."/>
            <person name="An H.-J."/>
            <person name="Andrews-Pfannkoch C."/>
            <person name="Baldwin D."/>
            <person name="Ballew R.M."/>
            <person name="Basu A."/>
            <person name="Baxendale J."/>
            <person name="Bayraktaroglu L."/>
            <person name="Beasley E.M."/>
            <person name="Beeson K.Y."/>
            <person name="Benos P.V."/>
            <person name="Berman B.P."/>
            <person name="Bhandari D."/>
            <person name="Bolshakov S."/>
            <person name="Borkova D."/>
            <person name="Botchan M.R."/>
            <person name="Bouck J."/>
            <person name="Brokstein P."/>
            <person name="Brottier P."/>
            <person name="Burtis K.C."/>
            <person name="Busam D.A."/>
            <person name="Butler H."/>
            <person name="Cadieu E."/>
            <person name="Center A."/>
            <person name="Chandra I."/>
            <person name="Cherry J.M."/>
            <person name="Cawley S."/>
            <person name="Dahlke C."/>
            <person name="Davenport L.B."/>
            <person name="Davies P."/>
            <person name="de Pablos B."/>
            <person name="Delcher A."/>
            <person name="Deng Z."/>
            <person name="Mays A.D."/>
            <person name="Dew I."/>
            <person name="Dietz S.M."/>
            <person name="Dodson K."/>
            <person name="Doup L.E."/>
            <person name="Downes M."/>
            <person name="Dugan-Rocha S."/>
            <person name="Dunkov B.C."/>
            <person name="Dunn P."/>
            <person name="Durbin K.J."/>
            <person name="Evangelista C.C."/>
            <person name="Ferraz C."/>
            <person name="Ferriera S."/>
            <person name="Fleischmann W."/>
            <person name="Fosler C."/>
            <person name="Gabrielian A.E."/>
            <person name="Garg N.S."/>
            <person name="Gelbart W.M."/>
            <person name="Glasser K."/>
            <person name="Glodek A."/>
            <person name="Gong F."/>
            <person name="Gorrell J.H."/>
            <person name="Gu Z."/>
            <person name="Guan P."/>
            <person name="Harris M."/>
            <person name="Harris N.L."/>
            <person name="Harvey D.A."/>
            <person name="Heiman T.J."/>
            <person name="Hernandez J.R."/>
            <person name="Houck J."/>
            <person name="Hostin D."/>
            <person name="Houston K.A."/>
            <person name="Howland T.J."/>
            <person name="Wei M.-H."/>
            <person name="Ibegwam C."/>
            <person name="Jalali M."/>
            <person name="Kalush F."/>
            <person name="Karpen G.H."/>
            <person name="Ke Z."/>
            <person name="Kennison J.A."/>
            <person name="Ketchum K.A."/>
            <person name="Kimmel B.E."/>
            <person name="Kodira C.D."/>
            <person name="Kraft C.L."/>
            <person name="Kravitz S."/>
            <person name="Kulp D."/>
            <person name="Lai Z."/>
            <person name="Lasko P."/>
            <person name="Lei Y."/>
            <person name="Levitsky A.A."/>
            <person name="Li J.H."/>
            <person name="Li Z."/>
            <person name="Liang Y."/>
            <person name="Lin X."/>
            <person name="Liu X."/>
            <person name="Mattei B."/>
            <person name="McIntosh T.C."/>
            <person name="McLeod M.P."/>
            <person name="McPherson D."/>
            <person name="Merkulov G."/>
            <person name="Milshina N.V."/>
            <person name="Mobarry C."/>
            <person name="Morris J."/>
            <person name="Moshrefi A."/>
            <person name="Mount S.M."/>
            <person name="Moy M."/>
            <person name="Murphy B."/>
            <person name="Murphy L."/>
            <person name="Muzny D.M."/>
            <person name="Nelson D.L."/>
            <person name="Nelson D.R."/>
            <person name="Nelson K.A."/>
            <person name="Nixon K."/>
            <person name="Nusskern D.R."/>
            <person name="Pacleb J.M."/>
            <person name="Palazzolo M."/>
            <person name="Pittman G.S."/>
            <person name="Pan S."/>
            <person name="Pollard J."/>
            <person name="Puri V."/>
            <person name="Reese M.G."/>
            <person name="Reinert K."/>
            <person name="Remington K."/>
            <person name="Saunders R.D.C."/>
            <person name="Scheeler F."/>
            <person name="Shen H."/>
            <person name="Shue B.C."/>
            <person name="Siden-Kiamos I."/>
            <person name="Simpson M."/>
            <person name="Skupski M.P."/>
            <person name="Smith T.J."/>
            <person name="Spier E."/>
            <person name="Spradling A.C."/>
            <person name="Stapleton M."/>
            <person name="Strong R."/>
            <person name="Sun E."/>
            <person name="Svirskas R."/>
            <person name="Tector C."/>
            <person name="Turner R."/>
            <person name="Venter E."/>
            <person name="Wang A.H."/>
            <person name="Wang X."/>
            <person name="Wang Z.-Y."/>
            <person name="Wassarman D.A."/>
            <person name="Weinstock G.M."/>
            <person name="Weissenbach J."/>
            <person name="Williams S.M."/>
            <person name="Woodage T."/>
            <person name="Worley K.C."/>
            <person name="Wu D."/>
            <person name="Yang S."/>
            <person name="Yao Q.A."/>
            <person name="Ye J."/>
            <person name="Yeh R.-F."/>
            <person name="Zaveri J.S."/>
            <person name="Zhan M."/>
            <person name="Zhang G."/>
            <person name="Zhao Q."/>
            <person name="Zheng L."/>
            <person name="Zheng X.H."/>
            <person name="Zhong F.N."/>
            <person name="Zhong W."/>
            <person name="Zhou X."/>
            <person name="Zhu S.C."/>
            <person name="Zhu X."/>
            <person name="Smith H.O."/>
            <person name="Gibbs R.A."/>
            <person name="Myers E.W."/>
            <person name="Rubin G.M."/>
            <person name="Venter J.C."/>
        </authorList>
    </citation>
    <scope>NUCLEOTIDE SEQUENCE [LARGE SCALE GENOMIC DNA]</scope>
    <source>
        <strain evidence="17">Berkeley</strain>
    </source>
</reference>
<reference evidence="17" key="3">
    <citation type="journal article" date="2002" name="Genome Biol.">
        <title>Annotation of the Drosophila melanogaster euchromatic genome: a systematic review.</title>
        <authorList>
            <person name="Misra S."/>
            <person name="Crosby M.A."/>
            <person name="Mungall C.J."/>
            <person name="Matthews B.B."/>
            <person name="Campbell K.S."/>
            <person name="Hradecky P."/>
            <person name="Huang Y."/>
            <person name="Kaminker J.S."/>
            <person name="Millburn G.H."/>
            <person name="Prochnik S.E."/>
            <person name="Smith C.D."/>
            <person name="Tupy J.L."/>
            <person name="Whitfield E.J."/>
            <person name="Bayraktaroglu L."/>
            <person name="Berman B.P."/>
            <person name="Bettencourt B.R."/>
            <person name="Celniker S.E."/>
            <person name="de Grey A.D.N.J."/>
            <person name="Drysdale R.A."/>
            <person name="Harris N.L."/>
            <person name="Richter J."/>
            <person name="Russo S."/>
            <person name="Schroeder A.J."/>
            <person name="Shu S.Q."/>
            <person name="Stapleton M."/>
            <person name="Yamada C."/>
            <person name="Ashburner M."/>
            <person name="Gelbart W.M."/>
            <person name="Rubin G.M."/>
            <person name="Lewis S.E."/>
        </authorList>
    </citation>
    <scope>GENOME REANNOTATION</scope>
    <source>
        <strain evidence="17">Berkeley</strain>
    </source>
</reference>
<reference evidence="14" key="4">
    <citation type="journal article" date="2002" name="Genome Biol.">
        <title>A Drosophila full-length cDNA resource.</title>
        <authorList>
            <person name="Stapleton M."/>
            <person name="Carlson J.W."/>
            <person name="Brokstein P."/>
            <person name="Yu C."/>
            <person name="Champe M."/>
            <person name="George R.A."/>
            <person name="Guarin H."/>
            <person name="Kronmiller B."/>
            <person name="Pacleb J.M."/>
            <person name="Park S."/>
            <person name="Wan K.H."/>
            <person name="Rubin G.M."/>
            <person name="Celniker S.E."/>
        </authorList>
    </citation>
    <scope>NUCLEOTIDE SEQUENCE [LARGE SCALE MRNA]</scope>
    <source>
        <strain evidence="14">Berkeley</strain>
        <tissue evidence="14">Head</tissue>
    </source>
</reference>
<reference evidence="12" key="5">
    <citation type="journal article" date="1969" name="Nature">
        <title>Abnormal electroretinograms in visual mutants of Drosophila.</title>
        <authorList>
            <person name="Hotta Y."/>
            <person name="Benzer S."/>
        </authorList>
    </citation>
    <scope>FUNCTION</scope>
    <scope>MUTAGENESIS OF ARG-217</scope>
</reference>
<reference evidence="12" key="6">
    <citation type="journal article" date="1996" name="Arch. Insect Biochem. Physiol.">
        <title>Catecholamine metabolism and in vitro induction of premature cuticle melanization in wild type and pigmentation mutants of Drosophila melanogaster.</title>
        <authorList>
            <person name="Walter M.F."/>
            <person name="Zeineh L.L."/>
            <person name="Black B.C."/>
            <person name="McIvor W.E."/>
            <person name="Wright T.R."/>
            <person name="Biessmann H."/>
        </authorList>
    </citation>
    <scope>FUNCTION</scope>
    <scope>MUTAGENESIS OF ARG-217</scope>
</reference>
<reference evidence="12" key="7">
    <citation type="journal article" date="2002" name="J. Neurosci.">
        <title>tan and ebony genes regulate a novel pathway for transmitter metabolism at fly photoreceptor terminals.</title>
        <authorList>
            <person name="Borycz J."/>
            <person name="Borycz J.A."/>
            <person name="Loubani M."/>
            <person name="Meinertzhagen I.A."/>
        </authorList>
    </citation>
    <scope>FUNCTION</scope>
    <scope>MUTAGENESIS OF ARG-217</scope>
</reference>
<reference evidence="12" key="8">
    <citation type="journal article" date="2005" name="PLoS Genet.">
        <title>Drosophila tan encodes a novel hydrolase required in pigmentation and vision.</title>
        <authorList>
            <person name="True J.R."/>
            <person name="Yeh S.D."/>
            <person name="Hovemann B.T."/>
            <person name="Kemme T."/>
            <person name="Meinertzhagen I.A."/>
            <person name="Edwards T.N."/>
            <person name="Liou S.R."/>
            <person name="Han Q."/>
            <person name="Li J."/>
        </authorList>
    </citation>
    <scope>FUNCTION</scope>
    <scope>CATALYTIC ACTIVITY</scope>
    <scope>TISSUE SPECIFICITY</scope>
    <scope>MUTAGENESIS OF ARG-217</scope>
</reference>
<reference evidence="12" key="9">
    <citation type="journal article" date="2007" name="J. Comp. Neurol.">
        <title>Drosophila photoreceptors express cysteine peptidase tan.</title>
        <authorList>
            <person name="Wagner S."/>
            <person name="Heseding C."/>
            <person name="Szlachta K."/>
            <person name="True J.R."/>
            <person name="Prinz H."/>
            <person name="Hovemann B.T."/>
        </authorList>
    </citation>
    <scope>SUBCELLULAR LOCATION</scope>
    <scope>TISSUE SPECIFICITY</scope>
    <scope>PROTEOLYTIC CLEAVAGE</scope>
</reference>
<reference evidence="12" key="10">
    <citation type="journal article" date="2010" name="J. Biol. Chem.">
        <title>Alternative tasks of Drosophila tan in neurotransmitter recycling versus cuticle sclerotization disclosed by kinetic properties.</title>
        <authorList>
            <person name="Aust S."/>
            <person name="Bruesselbach F."/>
            <person name="Puetz S."/>
            <person name="Hovemann B.T."/>
        </authorList>
    </citation>
    <scope>FUNCTION</scope>
    <scope>CATALYTIC ACTIVITY</scope>
    <scope>BIOPHYSICOCHEMICAL PROPERTIES</scope>
    <scope>SUBUNIT</scope>
    <scope>TISSUE SPECIFICITY</scope>
    <scope>PROTEOLYTIC CLEAVAGE</scope>
    <scope>MUTAGENESIS OF GLY-121; CYS-122; ARG-217 AND MET-256</scope>
</reference>
<reference evidence="12" key="11">
    <citation type="journal article" date="2019" name="Front. Physiol.">
        <title>Pleiotropic Effects of ebony and tan on Pigmentation and Cuticular Hydrocarbon Composition in Drosophila melanogaster.</title>
        <authorList>
            <person name="Massey J.H."/>
            <person name="Akiyama N."/>
            <person name="Bien T."/>
            <person name="Dreisewerd K."/>
            <person name="Wittkopp P.J."/>
            <person name="Yew J.Y."/>
            <person name="Takahashi A."/>
        </authorList>
    </citation>
    <scope>FUNCTION</scope>
    <scope>DISRUPTION PHENOTYPE</scope>
</reference>
<organism evidence="17">
    <name type="scientific">Drosophila melanogaster</name>
    <name type="common">Fruit fly</name>
    <dbReference type="NCBI Taxonomy" id="7227"/>
    <lineage>
        <taxon>Eukaryota</taxon>
        <taxon>Metazoa</taxon>
        <taxon>Ecdysozoa</taxon>
        <taxon>Arthropoda</taxon>
        <taxon>Hexapoda</taxon>
        <taxon>Insecta</taxon>
        <taxon>Pterygota</taxon>
        <taxon>Neoptera</taxon>
        <taxon>Endopterygota</taxon>
        <taxon>Diptera</taxon>
        <taxon>Brachycera</taxon>
        <taxon>Muscomorpha</taxon>
        <taxon>Ephydroidea</taxon>
        <taxon>Drosophilidae</taxon>
        <taxon>Drosophila</taxon>
        <taxon>Sophophora</taxon>
    </lineage>
</organism>
<accession>Q9W369</accession>
<evidence type="ECO:0000269" key="1">
    <source>
    </source>
</evidence>
<evidence type="ECO:0000269" key="2">
    <source>
    </source>
</evidence>
<evidence type="ECO:0000269" key="3">
    <source>
    </source>
</evidence>
<evidence type="ECO:0000269" key="4">
    <source>
    </source>
</evidence>
<evidence type="ECO:0000269" key="5">
    <source>
    </source>
</evidence>
<evidence type="ECO:0000269" key="6">
    <source>
    </source>
</evidence>
<evidence type="ECO:0000269" key="7">
    <source>
    </source>
</evidence>
<evidence type="ECO:0000269" key="8">
    <source>
    </source>
</evidence>
<evidence type="ECO:0000303" key="9">
    <source>
    </source>
</evidence>
<evidence type="ECO:0000303" key="10">
    <source>
    </source>
</evidence>
<evidence type="ECO:0000303" key="11">
    <source>
    </source>
</evidence>
<evidence type="ECO:0000305" key="12"/>
<evidence type="ECO:0000305" key="13">
    <source>
    </source>
</evidence>
<evidence type="ECO:0000312" key="14">
    <source>
        <dbReference type="EMBL" id="AAM75085.1"/>
    </source>
</evidence>
<evidence type="ECO:0000312" key="15">
    <source>
        <dbReference type="EMBL" id="ACZ36950.1"/>
    </source>
</evidence>
<evidence type="ECO:0000312" key="16">
    <source>
        <dbReference type="FlyBase" id="FBgn0086367"/>
    </source>
</evidence>
<evidence type="ECO:0000312" key="17">
    <source>
        <dbReference type="Proteomes" id="UP000000803"/>
    </source>
</evidence>
<proteinExistence type="evidence at protein level"/>
<feature type="chain" id="PRO_0000457048" description="Beta-alanyl-dopamine/carcinine hydrolase">
    <location>
        <begin position="1"/>
        <end position="387"/>
    </location>
</feature>
<feature type="chain" id="PRO_0000457049" description="Beta-alanyl-dopamine/carcinine hydrolase alpha subunit" evidence="4">
    <location>
        <begin position="1"/>
        <end position="121"/>
    </location>
</feature>
<feature type="chain" id="PRO_0000457050" description="Beta-alanyl-dopamine/carcinine hydrolase beta subunit" evidence="4">
    <location>
        <begin position="122"/>
        <end position="387"/>
    </location>
</feature>
<feature type="site" description="Cleavage; by autolysis" evidence="3 4 13">
    <location>
        <begin position="121"/>
        <end position="122"/>
    </location>
</feature>
<feature type="mutagenesis site" description="Reduces self-processing." evidence="4">
    <original>G</original>
    <variation>A</variation>
    <location>
        <position position="121"/>
    </location>
</feature>
<feature type="mutagenesis site" description="Impairs self-processing." evidence="4">
    <original>G</original>
    <variation>M</variation>
    <variation>V</variation>
    <location>
        <position position="121"/>
    </location>
</feature>
<feature type="mutagenesis site" description="Impairs self-processing. Does not affect homodimerization of the unprocessed form. Loss of carcinine hydrolysis." evidence="4">
    <original>C</original>
    <variation>A</variation>
    <location>
        <position position="122"/>
    </location>
</feature>
<feature type="mutagenesis site" description="Impairs self-processing." evidence="4">
    <original>C</original>
    <variation>S</variation>
    <variation>W</variation>
    <location>
        <position position="122"/>
    </location>
</feature>
<feature type="mutagenesis site" description="In tan1 and tan4; impairs self-processing. Loss of beta-alanyl-dopamine hydrolysis. Lighter pigmentation of the body. In newly emerged female imagoes and fly frass, beta-alanyl-dopamine (NBAD) levels are increased about 3-fold while dopamine levels are reduced by 50 percent. Reduces head histamine contents. Increases carcinine levels. Photoreceptor response to light is abnormal. Electroretinogram (ERG) recordings lack normal 'on' and 'off' transients suggesting an impaired synaptic transmission to postsynaptic cells. Reduces number of synaptic vesicles at the terminal of photoreceptor cells L1-L6." evidence="1 2 4 5 7 8">
    <original>R</original>
    <variation>P</variation>
    <location>
        <position position="217"/>
    </location>
</feature>
<feature type="mutagenesis site" description="In tan5; reduces stability resulting in rapid protein degradation. 4-fold increase in affinity for carcinine. No effect on self-processing." evidence="4">
    <original>M</original>
    <variation>I</variation>
    <location>
        <position position="256"/>
    </location>
</feature>
<dbReference type="EC" id="3.5.1.-" evidence="2 4 13"/>
<dbReference type="EMBL" id="GU144522">
    <property type="protein sequence ID" value="ACZ36950.1"/>
    <property type="molecule type" value="mRNA"/>
</dbReference>
<dbReference type="EMBL" id="AE014298">
    <property type="protein sequence ID" value="AAF46466.1"/>
    <property type="molecule type" value="Genomic_DNA"/>
</dbReference>
<dbReference type="EMBL" id="AY128492">
    <property type="protein sequence ID" value="AAM75085.1"/>
    <property type="molecule type" value="mRNA"/>
</dbReference>
<dbReference type="EMBL" id="AE014298">
    <property type="protein sequence ID" value="AHN59513.1"/>
    <property type="molecule type" value="Genomic_DNA"/>
</dbReference>
<dbReference type="RefSeq" id="NP_001285042.1">
    <property type="nucleotide sequence ID" value="NM_001298113.1"/>
</dbReference>
<dbReference type="RefSeq" id="NP_572543.1">
    <property type="nucleotide sequence ID" value="NM_132315.1"/>
</dbReference>
<dbReference type="SMR" id="Q9W369"/>
<dbReference type="FunCoup" id="Q9W369">
    <property type="interactions" value="201"/>
</dbReference>
<dbReference type="STRING" id="7227.FBpp0071270"/>
<dbReference type="MEROPS" id="C45.A01"/>
<dbReference type="PaxDb" id="7227-FBpp0071270"/>
<dbReference type="DNASU" id="31863"/>
<dbReference type="EnsemblMetazoa" id="FBtr0071335">
    <property type="protein sequence ID" value="FBpp0071270"/>
    <property type="gene ID" value="FBgn0086367"/>
</dbReference>
<dbReference type="EnsemblMetazoa" id="FBtr0340327">
    <property type="protein sequence ID" value="FBpp0309288"/>
    <property type="gene ID" value="FBgn0086367"/>
</dbReference>
<dbReference type="GeneID" id="31863"/>
<dbReference type="KEGG" id="dme:Dmel_CG12120"/>
<dbReference type="UCSC" id="CG12120-RA">
    <property type="organism name" value="d. melanogaster"/>
</dbReference>
<dbReference type="AGR" id="FB:FBgn0086367"/>
<dbReference type="CTD" id="20997"/>
<dbReference type="FlyBase" id="FBgn0086367">
    <property type="gene designation" value="t"/>
</dbReference>
<dbReference type="VEuPathDB" id="VectorBase:FBgn0086367"/>
<dbReference type="eggNOG" id="ENOG502QU2R">
    <property type="taxonomic scope" value="Eukaryota"/>
</dbReference>
<dbReference type="HOGENOM" id="CLU_058523_0_0_1"/>
<dbReference type="InParanoid" id="Q9W369"/>
<dbReference type="OMA" id="DKYPIYM"/>
<dbReference type="OrthoDB" id="189997at2759"/>
<dbReference type="BioGRID-ORCS" id="31863">
    <property type="hits" value="0 hits in 1 CRISPR screen"/>
</dbReference>
<dbReference type="GenomeRNAi" id="31863"/>
<dbReference type="PRO" id="PR:Q9W369"/>
<dbReference type="Proteomes" id="UP000000803">
    <property type="component" value="Chromosome X"/>
</dbReference>
<dbReference type="Bgee" id="FBgn0086367">
    <property type="expression patterns" value="Expressed in photoreceptor cell R7 (Drosophila) in insect head and 69 other cell types or tissues"/>
</dbReference>
<dbReference type="ExpressionAtlas" id="Q9W369">
    <property type="expression patterns" value="baseline and differential"/>
</dbReference>
<dbReference type="GO" id="GO:0030424">
    <property type="term" value="C:axon"/>
    <property type="evidence" value="ECO:0007669"/>
    <property type="project" value="UniProtKB-SubCell"/>
</dbReference>
<dbReference type="GO" id="GO:0005737">
    <property type="term" value="C:cytoplasm"/>
    <property type="evidence" value="ECO:0007005"/>
    <property type="project" value="FlyBase"/>
</dbReference>
<dbReference type="GO" id="GO:0005829">
    <property type="term" value="C:cytosol"/>
    <property type="evidence" value="ECO:0000314"/>
    <property type="project" value="FlyBase"/>
</dbReference>
<dbReference type="GO" id="GO:0003832">
    <property type="term" value="F:beta-alanyl-dopamine hydrolase activity"/>
    <property type="evidence" value="ECO:0000314"/>
    <property type="project" value="FlyBase"/>
</dbReference>
<dbReference type="GO" id="GO:0031964">
    <property type="term" value="F:beta-alanyl-histamine hydrolase activity"/>
    <property type="evidence" value="ECO:0000314"/>
    <property type="project" value="FlyBase"/>
</dbReference>
<dbReference type="GO" id="GO:0016787">
    <property type="term" value="F:hydrolase activity"/>
    <property type="evidence" value="ECO:0000314"/>
    <property type="project" value="FlyBase"/>
</dbReference>
<dbReference type="GO" id="GO:0048067">
    <property type="term" value="P:cuticle pigmentation"/>
    <property type="evidence" value="ECO:0000315"/>
    <property type="project" value="FlyBase"/>
</dbReference>
<dbReference type="GO" id="GO:0042416">
    <property type="term" value="P:dopamine biosynthetic process"/>
    <property type="evidence" value="ECO:0000314"/>
    <property type="project" value="FlyBase"/>
</dbReference>
<dbReference type="GO" id="GO:0001694">
    <property type="term" value="P:histamine biosynthetic process"/>
    <property type="evidence" value="ECO:0000314"/>
    <property type="project" value="FlyBase"/>
</dbReference>
<dbReference type="GO" id="GO:0001692">
    <property type="term" value="P:histamine metabolic process"/>
    <property type="evidence" value="ECO:0000315"/>
    <property type="project" value="FlyBase"/>
</dbReference>
<dbReference type="GO" id="GO:0007601">
    <property type="term" value="P:visual perception"/>
    <property type="evidence" value="ECO:0000315"/>
    <property type="project" value="FlyBase"/>
</dbReference>
<dbReference type="FunFam" id="1.10.10.2120:FF:000001">
    <property type="entry name" value="Mutant tan"/>
    <property type="match status" value="1"/>
</dbReference>
<dbReference type="FunFam" id="3.60.60.10:FF:000008">
    <property type="entry name" value="Mutant tan"/>
    <property type="match status" value="1"/>
</dbReference>
<dbReference type="Gene3D" id="1.10.10.2120">
    <property type="match status" value="1"/>
</dbReference>
<dbReference type="Gene3D" id="3.60.60.10">
    <property type="entry name" value="Penicillin V Acylase, Chain A"/>
    <property type="match status" value="1"/>
</dbReference>
<dbReference type="InterPro" id="IPR047794">
    <property type="entry name" value="C45_proenzyme-like"/>
</dbReference>
<dbReference type="InterPro" id="IPR047801">
    <property type="entry name" value="Peptidase_C45"/>
</dbReference>
<dbReference type="InterPro" id="IPR005079">
    <property type="entry name" value="Peptidase_C45_hydrolase"/>
</dbReference>
<dbReference type="NCBIfam" id="NF040521">
    <property type="entry name" value="C45_proenzyme"/>
    <property type="match status" value="1"/>
</dbReference>
<dbReference type="PANTHER" id="PTHR34180:SF1">
    <property type="entry name" value="BETA-ALANYL-DOPAMINE_CARCININE HYDROLASE"/>
    <property type="match status" value="1"/>
</dbReference>
<dbReference type="PANTHER" id="PTHR34180">
    <property type="entry name" value="PEPTIDASE C45"/>
    <property type="match status" value="1"/>
</dbReference>
<dbReference type="Pfam" id="PF03417">
    <property type="entry name" value="AAT"/>
    <property type="match status" value="1"/>
</dbReference>